<name>EIPR1_GEKJA</name>
<reference key="1">
    <citation type="submission" date="2004-05" db="EMBL/GenBank/DDBJ databases">
        <title>Analysis of expressed sequence tags and cloning of full length cDNA from brain and spinal cord cDNA library in Gecko.</title>
        <authorList>
            <person name="Liu Y."/>
            <person name="Gu X."/>
            <person name="Ding F."/>
            <person name="Liu M."/>
            <person name="Yao D."/>
            <person name="Shen M."/>
        </authorList>
    </citation>
    <scope>NUCLEOTIDE SEQUENCE [LARGE SCALE MRNA]</scope>
    <source>
        <tissue>Brain</tissue>
    </source>
</reference>
<sequence>MEDDAPVIYGLEFQARALTPQTAETDAIRFLVGTQSLKYDNQIHIIDFDDENNIINKNVLLHQVGEIWHISASPADKGVLATCYSKTSDSKVMTCAAVWRMPKELESGSHESPDDSSSNAQTLELLCHLDNTAHGNMAGVLWEPMGDGKKLISLADNHLLLWDLQESSSKAVLSNSAALEGKGQLKFTSGRWSPHHNCTQVATANDTAIRGWDIRTMSQIYCIESAHGQLVRDLDFNPNKQYYLASCGDDCKVKFWDTRNVSDPVKTLEEHSHWVWNVRYNHSHDQLVLTASSDSRVILSNMVSISSEPFGHLVDDEELSDQEDQHQEDKIKEPLQDSIIATYEEHEDSVYAVEWSSADPWLFASLSYDGRLVINRVPRALKYHILL</sequence>
<proteinExistence type="evidence at transcript level"/>
<feature type="chain" id="PRO_0000051304" description="EARP-interacting protein homolog">
    <location>
        <begin position="1"/>
        <end position="387"/>
    </location>
</feature>
<feature type="repeat" description="WD 1">
    <location>
        <begin position="132"/>
        <end position="172"/>
    </location>
</feature>
<feature type="repeat" description="WD 2">
    <location>
        <begin position="182"/>
        <end position="222"/>
    </location>
</feature>
<feature type="repeat" description="WD 3">
    <location>
        <begin position="226"/>
        <end position="266"/>
    </location>
</feature>
<feature type="repeat" description="WD 4">
    <location>
        <begin position="270"/>
        <end position="310"/>
    </location>
</feature>
<feature type="repeat" description="WD 5">
    <location>
        <begin position="345"/>
        <end position="385"/>
    </location>
</feature>
<keyword id="KW-0677">Repeat</keyword>
<keyword id="KW-0853">WD repeat</keyword>
<evidence type="ECO:0000250" key="1">
    <source>
        <dbReference type="UniProtKB" id="Q5PPK9"/>
    </source>
</evidence>
<evidence type="ECO:0000305" key="2"/>
<dbReference type="EMBL" id="AY641851">
    <property type="protein sequence ID" value="AAT68232.1"/>
    <property type="molecule type" value="mRNA"/>
</dbReference>
<dbReference type="RefSeq" id="NP_001310430.1">
    <property type="nucleotide sequence ID" value="NM_001323501.1"/>
</dbReference>
<dbReference type="SMR" id="Q6DUZ9"/>
<dbReference type="GeneID" id="107122311"/>
<dbReference type="KEGG" id="gja:107122311"/>
<dbReference type="CTD" id="7260"/>
<dbReference type="OrthoDB" id="196957at2759"/>
<dbReference type="Proteomes" id="UP000694871">
    <property type="component" value="Unplaced"/>
</dbReference>
<dbReference type="GO" id="GO:0016567">
    <property type="term" value="P:protein ubiquitination"/>
    <property type="evidence" value="ECO:0007669"/>
    <property type="project" value="TreeGrafter"/>
</dbReference>
<dbReference type="FunFam" id="2.130.10.10:FF:000156">
    <property type="entry name" value="protein TSSC1 isoform X1"/>
    <property type="match status" value="1"/>
</dbReference>
<dbReference type="Gene3D" id="2.130.10.10">
    <property type="entry name" value="YVTN repeat-like/Quinoprotein amine dehydrogenase"/>
    <property type="match status" value="1"/>
</dbReference>
<dbReference type="InterPro" id="IPR040323">
    <property type="entry name" value="EIPR1"/>
</dbReference>
<dbReference type="InterPro" id="IPR015943">
    <property type="entry name" value="WD40/YVTN_repeat-like_dom_sf"/>
</dbReference>
<dbReference type="InterPro" id="IPR019775">
    <property type="entry name" value="WD40_repeat_CS"/>
</dbReference>
<dbReference type="InterPro" id="IPR001680">
    <property type="entry name" value="WD40_rpt"/>
</dbReference>
<dbReference type="PANTHER" id="PTHR14205:SF15">
    <property type="entry name" value="EARP AND GARP COMPLEX-INTERACTING PROTEIN 1"/>
    <property type="match status" value="1"/>
</dbReference>
<dbReference type="PANTHER" id="PTHR14205">
    <property type="entry name" value="WD-REPEAT PROTEIN"/>
    <property type="match status" value="1"/>
</dbReference>
<dbReference type="Pfam" id="PF23609">
    <property type="entry name" value="Beta-prop_EIPR1"/>
    <property type="match status" value="1"/>
</dbReference>
<dbReference type="Pfam" id="PF00400">
    <property type="entry name" value="WD40"/>
    <property type="match status" value="1"/>
</dbReference>
<dbReference type="SMART" id="SM00320">
    <property type="entry name" value="WD40"/>
    <property type="match status" value="4"/>
</dbReference>
<dbReference type="SUPFAM" id="SSF101908">
    <property type="entry name" value="Putative isomerase YbhE"/>
    <property type="match status" value="1"/>
</dbReference>
<dbReference type="PROSITE" id="PS00678">
    <property type="entry name" value="WD_REPEATS_1"/>
    <property type="match status" value="1"/>
</dbReference>
<dbReference type="PROSITE" id="PS50082">
    <property type="entry name" value="WD_REPEATS_2"/>
    <property type="match status" value="1"/>
</dbReference>
<dbReference type="PROSITE" id="PS50294">
    <property type="entry name" value="WD_REPEATS_REGION"/>
    <property type="match status" value="1"/>
</dbReference>
<comment type="similarity">
    <text evidence="2">Belongs to the WD repeat EIPR1 family.</text>
</comment>
<gene>
    <name evidence="1" type="primary">eipr1</name>
    <name type="ORF">GekBS030P</name>
</gene>
<accession>Q6DUZ9</accession>
<organism>
    <name type="scientific">Gekko japonicus</name>
    <name type="common">Schlegel's Japanese gecko</name>
    <dbReference type="NCBI Taxonomy" id="146911"/>
    <lineage>
        <taxon>Eukaryota</taxon>
        <taxon>Metazoa</taxon>
        <taxon>Chordata</taxon>
        <taxon>Craniata</taxon>
        <taxon>Vertebrata</taxon>
        <taxon>Euteleostomi</taxon>
        <taxon>Lepidosauria</taxon>
        <taxon>Squamata</taxon>
        <taxon>Bifurcata</taxon>
        <taxon>Gekkota</taxon>
        <taxon>Gekkonidae</taxon>
        <taxon>Gekkoninae</taxon>
        <taxon>Gekko</taxon>
    </lineage>
</organism>
<protein>
    <recommendedName>
        <fullName evidence="1">EARP-interacting protein homolog</fullName>
    </recommendedName>
</protein>